<name>HAL4_SCHPO</name>
<comment type="function">
    <text evidence="4 5">Promotes K(+) uptake, by the potassium transporter trk1-trk2, which leads to the subsequent cellular resistance to toxic cations such as Na(+), Li(+) and Ca(2+).</text>
</comment>
<comment type="catalytic activity">
    <reaction>
        <text>L-seryl-[protein] + ATP = O-phospho-L-seryl-[protein] + ADP + H(+)</text>
        <dbReference type="Rhea" id="RHEA:17989"/>
        <dbReference type="Rhea" id="RHEA-COMP:9863"/>
        <dbReference type="Rhea" id="RHEA-COMP:11604"/>
        <dbReference type="ChEBI" id="CHEBI:15378"/>
        <dbReference type="ChEBI" id="CHEBI:29999"/>
        <dbReference type="ChEBI" id="CHEBI:30616"/>
        <dbReference type="ChEBI" id="CHEBI:83421"/>
        <dbReference type="ChEBI" id="CHEBI:456216"/>
        <dbReference type="EC" id="2.7.11.1"/>
    </reaction>
</comment>
<comment type="catalytic activity">
    <reaction>
        <text>L-threonyl-[protein] + ATP = O-phospho-L-threonyl-[protein] + ADP + H(+)</text>
        <dbReference type="Rhea" id="RHEA:46608"/>
        <dbReference type="Rhea" id="RHEA-COMP:11060"/>
        <dbReference type="Rhea" id="RHEA-COMP:11605"/>
        <dbReference type="ChEBI" id="CHEBI:15378"/>
        <dbReference type="ChEBI" id="CHEBI:30013"/>
        <dbReference type="ChEBI" id="CHEBI:30616"/>
        <dbReference type="ChEBI" id="CHEBI:61977"/>
        <dbReference type="ChEBI" id="CHEBI:456216"/>
        <dbReference type="EC" id="2.7.11.1"/>
    </reaction>
</comment>
<comment type="subunit">
    <text evidence="4">Interacts with sty1.</text>
</comment>
<comment type="subcellular location">
    <subcellularLocation>
        <location evidence="6">Cytoplasm</location>
    </subcellularLocation>
</comment>
<comment type="similarity">
    <text evidence="1">Belongs to the protein kinase superfamily. Ser/Thr protein kinase family.</text>
</comment>
<dbReference type="EC" id="2.7.11.1"/>
<dbReference type="EMBL" id="CU329670">
    <property type="protein sequence ID" value="CAB10142.1"/>
    <property type="molecule type" value="Genomic_DNA"/>
</dbReference>
<dbReference type="PIR" id="T38473">
    <property type="entry name" value="T38473"/>
</dbReference>
<dbReference type="RefSeq" id="NP_594866.1">
    <property type="nucleotide sequence ID" value="NM_001020295.2"/>
</dbReference>
<dbReference type="SMR" id="O14019"/>
<dbReference type="BioGRID" id="279252">
    <property type="interactions" value="4"/>
</dbReference>
<dbReference type="FunCoup" id="O14019">
    <property type="interactions" value="99"/>
</dbReference>
<dbReference type="STRING" id="284812.O14019"/>
<dbReference type="iPTMnet" id="O14019"/>
<dbReference type="PaxDb" id="4896-SPAC29A4.16.1"/>
<dbReference type="EnsemblFungi" id="SPAC29A4.16.1">
    <property type="protein sequence ID" value="SPAC29A4.16.1:pep"/>
    <property type="gene ID" value="SPAC29A4.16"/>
</dbReference>
<dbReference type="GeneID" id="2542804"/>
<dbReference type="KEGG" id="spo:2542804"/>
<dbReference type="PomBase" id="SPAC29A4.16">
    <property type="gene designation" value="hal4"/>
</dbReference>
<dbReference type="VEuPathDB" id="FungiDB:SPAC29A4.16"/>
<dbReference type="eggNOG" id="KOG0590">
    <property type="taxonomic scope" value="Eukaryota"/>
</dbReference>
<dbReference type="HOGENOM" id="CLU_000288_127_1_1"/>
<dbReference type="InParanoid" id="O14019"/>
<dbReference type="OMA" id="IMMIASA"/>
<dbReference type="PhylomeDB" id="O14019"/>
<dbReference type="PRO" id="PR:O14019"/>
<dbReference type="Proteomes" id="UP000002485">
    <property type="component" value="Chromosome I"/>
</dbReference>
<dbReference type="GO" id="GO:0005829">
    <property type="term" value="C:cytosol"/>
    <property type="evidence" value="ECO:0007005"/>
    <property type="project" value="PomBase"/>
</dbReference>
<dbReference type="GO" id="GO:0005524">
    <property type="term" value="F:ATP binding"/>
    <property type="evidence" value="ECO:0000255"/>
    <property type="project" value="PomBase"/>
</dbReference>
<dbReference type="GO" id="GO:0106310">
    <property type="term" value="F:protein serine kinase activity"/>
    <property type="evidence" value="ECO:0007669"/>
    <property type="project" value="RHEA"/>
</dbReference>
<dbReference type="GO" id="GO:0004674">
    <property type="term" value="F:protein serine/threonine kinase activity"/>
    <property type="evidence" value="ECO:0000318"/>
    <property type="project" value="GO_Central"/>
</dbReference>
<dbReference type="GO" id="GO:0030003">
    <property type="term" value="P:intracellular monoatomic cation homeostasis"/>
    <property type="evidence" value="ECO:0000318"/>
    <property type="project" value="GO_Central"/>
</dbReference>
<dbReference type="GO" id="GO:0030007">
    <property type="term" value="P:intracellular potassium ion homeostasis"/>
    <property type="evidence" value="ECO:0000315"/>
    <property type="project" value="PomBase"/>
</dbReference>
<dbReference type="CDD" id="cd13994">
    <property type="entry name" value="STKc_HAL4_like"/>
    <property type="match status" value="1"/>
</dbReference>
<dbReference type="FunFam" id="1.10.510.10:FF:000183">
    <property type="entry name" value="Serine/threonine-protein kinase hal4"/>
    <property type="match status" value="1"/>
</dbReference>
<dbReference type="Gene3D" id="1.10.510.10">
    <property type="entry name" value="Transferase(Phosphotransferase) domain 1"/>
    <property type="match status" value="1"/>
</dbReference>
<dbReference type="InterPro" id="IPR011009">
    <property type="entry name" value="Kinase-like_dom_sf"/>
</dbReference>
<dbReference type="InterPro" id="IPR000719">
    <property type="entry name" value="Prot_kinase_dom"/>
</dbReference>
<dbReference type="InterPro" id="IPR017441">
    <property type="entry name" value="Protein_kinase_ATP_BS"/>
</dbReference>
<dbReference type="InterPro" id="IPR008271">
    <property type="entry name" value="Ser/Thr_kinase_AS"/>
</dbReference>
<dbReference type="PANTHER" id="PTHR24343:SF558">
    <property type="entry name" value="PROTEIN KINASE DOMAIN-CONTAINING PROTEIN"/>
    <property type="match status" value="1"/>
</dbReference>
<dbReference type="PANTHER" id="PTHR24343">
    <property type="entry name" value="SERINE/THREONINE KINASE"/>
    <property type="match status" value="1"/>
</dbReference>
<dbReference type="Pfam" id="PF00069">
    <property type="entry name" value="Pkinase"/>
    <property type="match status" value="1"/>
</dbReference>
<dbReference type="SMART" id="SM00220">
    <property type="entry name" value="S_TKc"/>
    <property type="match status" value="1"/>
</dbReference>
<dbReference type="SUPFAM" id="SSF56112">
    <property type="entry name" value="Protein kinase-like (PK-like)"/>
    <property type="match status" value="1"/>
</dbReference>
<dbReference type="PROSITE" id="PS00107">
    <property type="entry name" value="PROTEIN_KINASE_ATP"/>
    <property type="match status" value="1"/>
</dbReference>
<dbReference type="PROSITE" id="PS50011">
    <property type="entry name" value="PROTEIN_KINASE_DOM"/>
    <property type="match status" value="1"/>
</dbReference>
<dbReference type="PROSITE" id="PS00108">
    <property type="entry name" value="PROTEIN_KINASE_ST"/>
    <property type="match status" value="1"/>
</dbReference>
<sequence>MGEKDKLHEISSKFASLGLGSLKSTPKARETTEPPPPSSQQPPSTPNGKEAASPSALKQNVRPSLNSVQQTPASIDAVASSSNVSLQSQQPLSKPVVSSKPNQTTAMPPPSNNPSRHVSSTSNKPAAVSPNPAAHHAELPSGSVPPSASVSRANSTATTTPHKAGVVSNPAAANVHVLSVAASPNPSTPSNGPAPVSTTATPSRNPVTRLQRIFSQNSVSRQNSRTGRGAAVANTEETNSTGGSETGGAANSSSTSNPSSAKWSRFTVYDDASHTHQLRPARRQEKLGKMLKDFLAGNSKKREEERIAKEAADAQHQLSLVQSWINGYGQEKLADKKDPAKVSASFVEKYGRCQEVIGRGAFGVVRIAHKVDPQNSGSETLYAVKEFRRKPAESQKKYTKRLTSEFCISSSLRHPNVIHTLDLIQDGKGDYCEVMELCSGGDLYTLIMAAGRLEPMEADCFFKQLMRGVDYLHDMGVAHRDLKPENLLLTVSGSLKITDFGNGECFRMAWEKEAHMTCGLCGSAPYIAPEEYTESEFDPRAVDVWACGVIYMAMRTGRHLWRVAKKSEDEYYSRYLMDRKNESGYEPIEMLERSRCRNTLYNILHPNPTYRLTAKQIMKSEWVRSITLCEAGNAGL</sequence>
<gene>
    <name type="primary">hal4</name>
    <name type="synonym">ppk10</name>
    <name type="synonym">sat4</name>
    <name type="ORF">SPAC29A4.16</name>
</gene>
<protein>
    <recommendedName>
        <fullName>Serine/threonine-protein kinase hal4</fullName>
        <ecNumber>2.7.11.1</ecNumber>
    </recommendedName>
    <alternativeName>
        <fullName>Halotolerance protein 4</fullName>
    </alternativeName>
    <alternativeName>
        <fullName>Serine/threonine-protein kinase ppk10</fullName>
    </alternativeName>
</protein>
<evidence type="ECO:0000255" key="1">
    <source>
        <dbReference type="PROSITE-ProRule" id="PRU00159"/>
    </source>
</evidence>
<evidence type="ECO:0000255" key="2">
    <source>
        <dbReference type="PROSITE-ProRule" id="PRU10027"/>
    </source>
</evidence>
<evidence type="ECO:0000256" key="3">
    <source>
        <dbReference type="SAM" id="MobiDB-lite"/>
    </source>
</evidence>
<evidence type="ECO:0000269" key="4">
    <source>
    </source>
</evidence>
<evidence type="ECO:0000269" key="5">
    <source>
    </source>
</evidence>
<evidence type="ECO:0000269" key="6">
    <source>
    </source>
</evidence>
<evidence type="ECO:0000269" key="7">
    <source>
    </source>
</evidence>
<proteinExistence type="evidence at protein level"/>
<feature type="chain" id="PRO_0000085986" description="Serine/threonine-protein kinase hal4">
    <location>
        <begin position="1"/>
        <end position="636"/>
    </location>
</feature>
<feature type="domain" description="Protein kinase" evidence="1">
    <location>
        <begin position="351"/>
        <end position="623"/>
    </location>
</feature>
<feature type="region of interest" description="Disordered" evidence="3">
    <location>
        <begin position="1"/>
        <end position="167"/>
    </location>
</feature>
<feature type="region of interest" description="Disordered" evidence="3">
    <location>
        <begin position="181"/>
        <end position="261"/>
    </location>
</feature>
<feature type="compositionally biased region" description="Basic and acidic residues" evidence="3">
    <location>
        <begin position="1"/>
        <end position="11"/>
    </location>
</feature>
<feature type="compositionally biased region" description="Pro residues" evidence="3">
    <location>
        <begin position="33"/>
        <end position="45"/>
    </location>
</feature>
<feature type="compositionally biased region" description="Polar residues" evidence="3">
    <location>
        <begin position="56"/>
        <end position="92"/>
    </location>
</feature>
<feature type="compositionally biased region" description="Polar residues" evidence="3">
    <location>
        <begin position="113"/>
        <end position="124"/>
    </location>
</feature>
<feature type="compositionally biased region" description="Low complexity" evidence="3">
    <location>
        <begin position="140"/>
        <end position="155"/>
    </location>
</feature>
<feature type="compositionally biased region" description="Polar residues" evidence="3">
    <location>
        <begin position="182"/>
        <end position="226"/>
    </location>
</feature>
<feature type="compositionally biased region" description="Low complexity" evidence="3">
    <location>
        <begin position="234"/>
        <end position="261"/>
    </location>
</feature>
<feature type="active site" description="Proton acceptor" evidence="1 2">
    <location>
        <position position="481"/>
    </location>
</feature>
<feature type="binding site" evidence="1">
    <location>
        <begin position="357"/>
        <end position="365"/>
    </location>
    <ligand>
        <name>ATP</name>
        <dbReference type="ChEBI" id="CHEBI:30616"/>
    </ligand>
</feature>
<feature type="binding site" evidence="1">
    <location>
        <position position="385"/>
    </location>
    <ligand>
        <name>ATP</name>
        <dbReference type="ChEBI" id="CHEBI:30616"/>
    </ligand>
</feature>
<feature type="modified residue" description="Phosphoserine" evidence="7">
    <location>
        <position position="218"/>
    </location>
</feature>
<feature type="modified residue" description="Phosphothreonine" evidence="7">
    <location>
        <position position="238"/>
    </location>
</feature>
<feature type="modified residue" description="Phosphothreonine" evidence="7">
    <location>
        <position position="241"/>
    </location>
</feature>
<feature type="modified residue" description="Phosphoserine" evidence="7">
    <location>
        <position position="299"/>
    </location>
</feature>
<keyword id="KW-0067">ATP-binding</keyword>
<keyword id="KW-0963">Cytoplasm</keyword>
<keyword id="KW-0418">Kinase</keyword>
<keyword id="KW-0547">Nucleotide-binding</keyword>
<keyword id="KW-0597">Phosphoprotein</keyword>
<keyword id="KW-1185">Reference proteome</keyword>
<keyword id="KW-0723">Serine/threonine-protein kinase</keyword>
<keyword id="KW-0808">Transferase</keyword>
<organism>
    <name type="scientific">Schizosaccharomyces pombe (strain 972 / ATCC 24843)</name>
    <name type="common">Fission yeast</name>
    <dbReference type="NCBI Taxonomy" id="284812"/>
    <lineage>
        <taxon>Eukaryota</taxon>
        <taxon>Fungi</taxon>
        <taxon>Dikarya</taxon>
        <taxon>Ascomycota</taxon>
        <taxon>Taphrinomycotina</taxon>
        <taxon>Schizosaccharomycetes</taxon>
        <taxon>Schizosaccharomycetales</taxon>
        <taxon>Schizosaccharomycetaceae</taxon>
        <taxon>Schizosaccharomyces</taxon>
    </lineage>
</organism>
<reference key="1">
    <citation type="journal article" date="2002" name="Nature">
        <title>The genome sequence of Schizosaccharomyces pombe.</title>
        <authorList>
            <person name="Wood V."/>
            <person name="Gwilliam R."/>
            <person name="Rajandream M.A."/>
            <person name="Lyne M.H."/>
            <person name="Lyne R."/>
            <person name="Stewart A."/>
            <person name="Sgouros J.G."/>
            <person name="Peat N."/>
            <person name="Hayles J."/>
            <person name="Baker S.G."/>
            <person name="Basham D."/>
            <person name="Bowman S."/>
            <person name="Brooks K."/>
            <person name="Brown D."/>
            <person name="Brown S."/>
            <person name="Chillingworth T."/>
            <person name="Churcher C.M."/>
            <person name="Collins M."/>
            <person name="Connor R."/>
            <person name="Cronin A."/>
            <person name="Davis P."/>
            <person name="Feltwell T."/>
            <person name="Fraser A."/>
            <person name="Gentles S."/>
            <person name="Goble A."/>
            <person name="Hamlin N."/>
            <person name="Harris D.E."/>
            <person name="Hidalgo J."/>
            <person name="Hodgson G."/>
            <person name="Holroyd S."/>
            <person name="Hornsby T."/>
            <person name="Howarth S."/>
            <person name="Huckle E.J."/>
            <person name="Hunt S."/>
            <person name="Jagels K."/>
            <person name="James K.D."/>
            <person name="Jones L."/>
            <person name="Jones M."/>
            <person name="Leather S."/>
            <person name="McDonald S."/>
            <person name="McLean J."/>
            <person name="Mooney P."/>
            <person name="Moule S."/>
            <person name="Mungall K.L."/>
            <person name="Murphy L.D."/>
            <person name="Niblett D."/>
            <person name="Odell C."/>
            <person name="Oliver K."/>
            <person name="O'Neil S."/>
            <person name="Pearson D."/>
            <person name="Quail M.A."/>
            <person name="Rabbinowitsch E."/>
            <person name="Rutherford K.M."/>
            <person name="Rutter S."/>
            <person name="Saunders D."/>
            <person name="Seeger K."/>
            <person name="Sharp S."/>
            <person name="Skelton J."/>
            <person name="Simmonds M.N."/>
            <person name="Squares R."/>
            <person name="Squares S."/>
            <person name="Stevens K."/>
            <person name="Taylor K."/>
            <person name="Taylor R.G."/>
            <person name="Tivey A."/>
            <person name="Walsh S.V."/>
            <person name="Warren T."/>
            <person name="Whitehead S."/>
            <person name="Woodward J.R."/>
            <person name="Volckaert G."/>
            <person name="Aert R."/>
            <person name="Robben J."/>
            <person name="Grymonprez B."/>
            <person name="Weltjens I."/>
            <person name="Vanstreels E."/>
            <person name="Rieger M."/>
            <person name="Schaefer M."/>
            <person name="Mueller-Auer S."/>
            <person name="Gabel C."/>
            <person name="Fuchs M."/>
            <person name="Duesterhoeft A."/>
            <person name="Fritzc C."/>
            <person name="Holzer E."/>
            <person name="Moestl D."/>
            <person name="Hilbert H."/>
            <person name="Borzym K."/>
            <person name="Langer I."/>
            <person name="Beck A."/>
            <person name="Lehrach H."/>
            <person name="Reinhardt R."/>
            <person name="Pohl T.M."/>
            <person name="Eger P."/>
            <person name="Zimmermann W."/>
            <person name="Wedler H."/>
            <person name="Wambutt R."/>
            <person name="Purnelle B."/>
            <person name="Goffeau A."/>
            <person name="Cadieu E."/>
            <person name="Dreano S."/>
            <person name="Gloux S."/>
            <person name="Lelaure V."/>
            <person name="Mottier S."/>
            <person name="Galibert F."/>
            <person name="Aves S.J."/>
            <person name="Xiang Z."/>
            <person name="Hunt C."/>
            <person name="Moore K."/>
            <person name="Hurst S.M."/>
            <person name="Lucas M."/>
            <person name="Rochet M."/>
            <person name="Gaillardin C."/>
            <person name="Tallada V.A."/>
            <person name="Garzon A."/>
            <person name="Thode G."/>
            <person name="Daga R.R."/>
            <person name="Cruzado L."/>
            <person name="Jimenez J."/>
            <person name="Sanchez M."/>
            <person name="del Rey F."/>
            <person name="Benito J."/>
            <person name="Dominguez A."/>
            <person name="Revuelta J.L."/>
            <person name="Moreno S."/>
            <person name="Armstrong J."/>
            <person name="Forsburg S.L."/>
            <person name="Cerutti L."/>
            <person name="Lowe T."/>
            <person name="McCombie W.R."/>
            <person name="Paulsen I."/>
            <person name="Potashkin J."/>
            <person name="Shpakovski G.V."/>
            <person name="Ussery D."/>
            <person name="Barrell B.G."/>
            <person name="Nurse P."/>
        </authorList>
    </citation>
    <scope>NUCLEOTIDE SEQUENCE [LARGE SCALE GENOMIC DNA]</scope>
    <source>
        <strain>972 / ATCC 24843</strain>
    </source>
</reference>
<reference key="2">
    <citation type="journal article" date="2005" name="Eukaryot. Cell">
        <title>Systematic deletion analysis of fission yeast protein kinases.</title>
        <authorList>
            <person name="Bimbo A."/>
            <person name="Jia Y."/>
            <person name="Poh S.L."/>
            <person name="Karuturi R.K.M."/>
            <person name="den Elzen N."/>
            <person name="Peng X."/>
            <person name="Zheng L."/>
            <person name="O'Connell M."/>
            <person name="Liu E.T."/>
            <person name="Balasubramanian M.K."/>
            <person name="Liu J."/>
        </authorList>
    </citation>
    <scope>IDENTIFICATION</scope>
</reference>
<reference key="3">
    <citation type="journal article" date="2005" name="Genes Cells">
        <title>A novel pathway determining multidrug sensitivity in Schizosaccharomyces pombe.</title>
        <authorList>
            <person name="Thornton G."/>
            <person name="Wilkinson C.R."/>
            <person name="Toone W.M."/>
            <person name="Jones N."/>
        </authorList>
    </citation>
    <scope>FUNCTION</scope>
</reference>
<reference key="4">
    <citation type="journal article" date="2005" name="Mol. Cell. Biol.">
        <title>Response of fission yeast to toxic cations involves cooperative action of the stress-activated protein kinase Spc1/Sty1 and the Hal4 protein kinase.</title>
        <authorList>
            <person name="Wang L.-Y."/>
            <person name="Shimada K."/>
            <person name="Morishita M."/>
            <person name="Shiozaki K."/>
        </authorList>
    </citation>
    <scope>FUNCTION</scope>
    <scope>INTERACTION WITH STY1</scope>
</reference>
<reference key="5">
    <citation type="journal article" date="2006" name="Nat. Biotechnol.">
        <title>ORFeome cloning and global analysis of protein localization in the fission yeast Schizosaccharomyces pombe.</title>
        <authorList>
            <person name="Matsuyama A."/>
            <person name="Arai R."/>
            <person name="Yashiroda Y."/>
            <person name="Shirai A."/>
            <person name="Kamata A."/>
            <person name="Sekido S."/>
            <person name="Kobayashi Y."/>
            <person name="Hashimoto A."/>
            <person name="Hamamoto M."/>
            <person name="Hiraoka Y."/>
            <person name="Horinouchi S."/>
            <person name="Yoshida M."/>
        </authorList>
    </citation>
    <scope>SUBCELLULAR LOCATION [LARGE SCALE ANALYSIS]</scope>
</reference>
<reference key="6">
    <citation type="journal article" date="2008" name="J. Proteome Res.">
        <title>Phosphoproteome analysis of fission yeast.</title>
        <authorList>
            <person name="Wilson-Grady J.T."/>
            <person name="Villen J."/>
            <person name="Gygi S.P."/>
        </authorList>
    </citation>
    <scope>PHOSPHORYLATION [LARGE SCALE ANALYSIS] AT SER-218; THR-238; THR-241 AND SER-299</scope>
    <scope>IDENTIFICATION BY MASS SPECTROMETRY</scope>
</reference>
<accession>O14019</accession>